<gene>
    <name evidence="1" type="primary">ssuD</name>
    <name type="ordered locus">RALTA_A1783</name>
</gene>
<keyword id="KW-0285">Flavoprotein</keyword>
<keyword id="KW-0288">FMN</keyword>
<keyword id="KW-0503">Monooxygenase</keyword>
<keyword id="KW-0560">Oxidoreductase</keyword>
<accession>B3R2K7</accession>
<protein>
    <recommendedName>
        <fullName evidence="1">Alkanesulfonate monooxygenase</fullName>
        <ecNumber evidence="1">1.14.14.5</ecNumber>
    </recommendedName>
    <alternativeName>
        <fullName evidence="1">FMNH2-dependent aliphatic sulfonate monooxygenase</fullName>
    </alternativeName>
</protein>
<dbReference type="EC" id="1.14.14.5" evidence="1"/>
<dbReference type="EMBL" id="CU633749">
    <property type="protein sequence ID" value="CAQ69725.1"/>
    <property type="molecule type" value="Genomic_DNA"/>
</dbReference>
<dbReference type="RefSeq" id="WP_012353045.1">
    <property type="nucleotide sequence ID" value="NC_010528.1"/>
</dbReference>
<dbReference type="SMR" id="B3R2K7"/>
<dbReference type="GeneID" id="29761036"/>
<dbReference type="KEGG" id="cti:RALTA_A1783"/>
<dbReference type="eggNOG" id="COG2141">
    <property type="taxonomic scope" value="Bacteria"/>
</dbReference>
<dbReference type="HOGENOM" id="CLU_027853_1_0_4"/>
<dbReference type="BioCyc" id="CTAI977880:RALTA_RS08595-MONOMER"/>
<dbReference type="Proteomes" id="UP000001692">
    <property type="component" value="Chromosome 1"/>
</dbReference>
<dbReference type="GO" id="GO:0008726">
    <property type="term" value="F:alkanesulfonate monooxygenase activity"/>
    <property type="evidence" value="ECO:0007669"/>
    <property type="project" value="UniProtKB-UniRule"/>
</dbReference>
<dbReference type="GO" id="GO:0046306">
    <property type="term" value="P:alkanesulfonate catabolic process"/>
    <property type="evidence" value="ECO:0007669"/>
    <property type="project" value="TreeGrafter"/>
</dbReference>
<dbReference type="CDD" id="cd01094">
    <property type="entry name" value="Alkanesulfonate_monoxygenase"/>
    <property type="match status" value="1"/>
</dbReference>
<dbReference type="Gene3D" id="3.20.20.30">
    <property type="entry name" value="Luciferase-like domain"/>
    <property type="match status" value="1"/>
</dbReference>
<dbReference type="HAMAP" id="MF_01229">
    <property type="entry name" value="Alkanesulf_monooxygen"/>
    <property type="match status" value="1"/>
</dbReference>
<dbReference type="InterPro" id="IPR019911">
    <property type="entry name" value="Alkanesulphonate_mOase_FMN-dep"/>
</dbReference>
<dbReference type="InterPro" id="IPR011251">
    <property type="entry name" value="Luciferase-like_dom"/>
</dbReference>
<dbReference type="InterPro" id="IPR036661">
    <property type="entry name" value="Luciferase-like_sf"/>
</dbReference>
<dbReference type="InterPro" id="IPR050172">
    <property type="entry name" value="SsuD_RutA_monooxygenase"/>
</dbReference>
<dbReference type="NCBIfam" id="TIGR03565">
    <property type="entry name" value="alk_sulf_monoox"/>
    <property type="match status" value="1"/>
</dbReference>
<dbReference type="NCBIfam" id="NF001939">
    <property type="entry name" value="PRK00719.1"/>
    <property type="match status" value="1"/>
</dbReference>
<dbReference type="PANTHER" id="PTHR42847">
    <property type="entry name" value="ALKANESULFONATE MONOOXYGENASE"/>
    <property type="match status" value="1"/>
</dbReference>
<dbReference type="PANTHER" id="PTHR42847:SF4">
    <property type="entry name" value="ALKANESULFONATE MONOOXYGENASE-RELATED"/>
    <property type="match status" value="1"/>
</dbReference>
<dbReference type="Pfam" id="PF00296">
    <property type="entry name" value="Bac_luciferase"/>
    <property type="match status" value="1"/>
</dbReference>
<dbReference type="SUPFAM" id="SSF51679">
    <property type="entry name" value="Bacterial luciferase-like"/>
    <property type="match status" value="1"/>
</dbReference>
<feature type="chain" id="PRO_1000139614" description="Alkanesulfonate monooxygenase">
    <location>
        <begin position="1"/>
        <end position="390"/>
    </location>
</feature>
<proteinExistence type="inferred from homology"/>
<comment type="function">
    <text evidence="1">Catalyzes the desulfonation of aliphatic sulfonates.</text>
</comment>
<comment type="catalytic activity">
    <reaction evidence="1">
        <text>an alkanesulfonate + FMNH2 + O2 = an aldehyde + FMN + sulfite + H2O + 2 H(+)</text>
        <dbReference type="Rhea" id="RHEA:23064"/>
        <dbReference type="ChEBI" id="CHEBI:15377"/>
        <dbReference type="ChEBI" id="CHEBI:15378"/>
        <dbReference type="ChEBI" id="CHEBI:15379"/>
        <dbReference type="ChEBI" id="CHEBI:17359"/>
        <dbReference type="ChEBI" id="CHEBI:17478"/>
        <dbReference type="ChEBI" id="CHEBI:57618"/>
        <dbReference type="ChEBI" id="CHEBI:58210"/>
        <dbReference type="ChEBI" id="CHEBI:134249"/>
        <dbReference type="EC" id="1.14.14.5"/>
    </reaction>
</comment>
<comment type="similarity">
    <text evidence="1">Belongs to the SsuD family.</text>
</comment>
<organism>
    <name type="scientific">Cupriavidus taiwanensis (strain DSM 17343 / BCRC 17206 / CCUG 44338 / CIP 107171 / LMG 19424 / R1)</name>
    <name type="common">Ralstonia taiwanensis (strain LMG 19424)</name>
    <dbReference type="NCBI Taxonomy" id="977880"/>
    <lineage>
        <taxon>Bacteria</taxon>
        <taxon>Pseudomonadati</taxon>
        <taxon>Pseudomonadota</taxon>
        <taxon>Betaproteobacteria</taxon>
        <taxon>Burkholderiales</taxon>
        <taxon>Burkholderiaceae</taxon>
        <taxon>Cupriavidus</taxon>
    </lineage>
</organism>
<evidence type="ECO:0000255" key="1">
    <source>
        <dbReference type="HAMAP-Rule" id="MF_01229"/>
    </source>
</evidence>
<reference key="1">
    <citation type="journal article" date="2008" name="Genome Res.">
        <title>Genome sequence of the beta-rhizobium Cupriavidus taiwanensis and comparative genomics of rhizobia.</title>
        <authorList>
            <person name="Amadou C."/>
            <person name="Pascal G."/>
            <person name="Mangenot S."/>
            <person name="Glew M."/>
            <person name="Bontemps C."/>
            <person name="Capela D."/>
            <person name="Carrere S."/>
            <person name="Cruveiller S."/>
            <person name="Dossat C."/>
            <person name="Lajus A."/>
            <person name="Marchetti M."/>
            <person name="Poinsot V."/>
            <person name="Rouy Z."/>
            <person name="Servin B."/>
            <person name="Saad M."/>
            <person name="Schenowitz C."/>
            <person name="Barbe V."/>
            <person name="Batut J."/>
            <person name="Medigue C."/>
            <person name="Masson-Boivin C."/>
        </authorList>
    </citation>
    <scope>NUCLEOTIDE SEQUENCE [LARGE SCALE GENOMIC DNA]</scope>
    <source>
        <strain>DSM 17343 / BCRC 17206 / CCUG 44338 / CIP 107171 / LMG 19424 / R1</strain>
    </source>
</reference>
<name>SSUD_CUPTR</name>
<sequence length="390" mass="42041">MQVFWFIPTHGDSRYLGTSEGARAVGFDYLRQVAVAADTLGYEGVLIPTGRSCEDPWVVASALAAVTQRLKFLVAVRPGLMAPTLAARMAATFDRISNGRLLINLVTGGDRAELEGDGLFLDHAARYEASAEFLRIWRQVLAASHDGDKVDYDGKHLSVKGATVLYPPLQRPHPPVYFGGSSAPAHALAGEQVDTYLTWGEPPAAVAQKLDDVRRHAARHGRTVKFGIRLHVIVRETDAAAWAAAEDLISRLDDDTVARAQAVFANMDSEGQRRMAALHAGGTRRTREALEISPNLWAGVGLVRGGAGTALVGDPATVAERLREYAALGIDTFVLSGYPHLEEAYRFAELVFPLLPRAVRAKFDNLPGKVLSGPFGEVMATGIVPRAAQS</sequence>